<proteinExistence type="inferred from homology"/>
<dbReference type="EC" id="1.15.1.1"/>
<dbReference type="EMBL" id="Z48215">
    <property type="protein sequence ID" value="CAA88248.1"/>
    <property type="molecule type" value="Genomic_DNA"/>
</dbReference>
<dbReference type="EMBL" id="Z48209">
    <property type="protein sequence ID" value="CAA88242.1"/>
    <property type="molecule type" value="Genomic_DNA"/>
</dbReference>
<dbReference type="PIR" id="S52360">
    <property type="entry name" value="S52360"/>
</dbReference>
<dbReference type="PIR" id="S52362">
    <property type="entry name" value="S52362"/>
</dbReference>
<dbReference type="SMR" id="P53643"/>
<dbReference type="STRING" id="28045.AWB95_21805"/>
<dbReference type="GO" id="GO:0046872">
    <property type="term" value="F:metal ion binding"/>
    <property type="evidence" value="ECO:0007669"/>
    <property type="project" value="UniProtKB-KW"/>
</dbReference>
<dbReference type="GO" id="GO:0004784">
    <property type="term" value="F:superoxide dismutase activity"/>
    <property type="evidence" value="ECO:0007669"/>
    <property type="project" value="UniProtKB-EC"/>
</dbReference>
<dbReference type="FunFam" id="1.10.287.990:FF:000001">
    <property type="entry name" value="Superoxide dismutase"/>
    <property type="match status" value="1"/>
</dbReference>
<dbReference type="Gene3D" id="1.10.287.990">
    <property type="entry name" value="Fe,Mn superoxide dismutase (SOD) domain"/>
    <property type="match status" value="1"/>
</dbReference>
<dbReference type="Gene3D" id="3.55.40.20">
    <property type="entry name" value="Iron/manganese superoxide dismutase, C-terminal domain"/>
    <property type="match status" value="1"/>
</dbReference>
<dbReference type="InterPro" id="IPR050265">
    <property type="entry name" value="Fe/Mn_Superoxide_Dismutase"/>
</dbReference>
<dbReference type="InterPro" id="IPR001189">
    <property type="entry name" value="Mn/Fe_SOD"/>
</dbReference>
<dbReference type="InterPro" id="IPR019832">
    <property type="entry name" value="Mn/Fe_SOD_C"/>
</dbReference>
<dbReference type="InterPro" id="IPR019831">
    <property type="entry name" value="Mn/Fe_SOD_N"/>
</dbReference>
<dbReference type="InterPro" id="IPR036324">
    <property type="entry name" value="Mn/Fe_SOD_N_sf"/>
</dbReference>
<dbReference type="InterPro" id="IPR036314">
    <property type="entry name" value="SOD_C_sf"/>
</dbReference>
<dbReference type="PANTHER" id="PTHR11404">
    <property type="entry name" value="SUPEROXIDE DISMUTASE 2"/>
    <property type="match status" value="1"/>
</dbReference>
<dbReference type="PANTHER" id="PTHR11404:SF6">
    <property type="entry name" value="SUPEROXIDE DISMUTASE [MN], MITOCHONDRIAL"/>
    <property type="match status" value="1"/>
</dbReference>
<dbReference type="Pfam" id="PF02777">
    <property type="entry name" value="Sod_Fe_C"/>
    <property type="match status" value="1"/>
</dbReference>
<dbReference type="Pfam" id="PF00081">
    <property type="entry name" value="Sod_Fe_N"/>
    <property type="match status" value="1"/>
</dbReference>
<dbReference type="PRINTS" id="PR01703">
    <property type="entry name" value="MNSODISMTASE"/>
</dbReference>
<dbReference type="SUPFAM" id="SSF54719">
    <property type="entry name" value="Fe,Mn superoxide dismutase (SOD), C-terminal domain"/>
    <property type="match status" value="1"/>
</dbReference>
<dbReference type="SUPFAM" id="SSF46609">
    <property type="entry name" value="Fe,Mn superoxide dismutase (SOD), N-terminal domain"/>
    <property type="match status" value="1"/>
</dbReference>
<keyword id="KW-0464">Manganese</keyword>
<keyword id="KW-0479">Metal-binding</keyword>
<keyword id="KW-0560">Oxidoreductase</keyword>
<protein>
    <recommendedName>
        <fullName>Superoxide dismutase [Mn]</fullName>
        <ecNumber>1.15.1.1</ecNumber>
    </recommendedName>
</protein>
<reference key="1">
    <citation type="journal article" date="1995" name="Clin. Mol. Pathol.">
        <title>Rapid identification of mycobacteria from AIDS patients by capillary electrophoretic profiling of amplified SOD gene.</title>
        <authorList>
            <person name="Bull T.J."/>
            <person name="Shanson D.C."/>
            <person name="Archard L.C."/>
        </authorList>
    </citation>
    <scope>NUCLEOTIDE SEQUENCE [GENOMIC DNA]</scope>
    <source>
        <strain>ATCC 51130 / CDC 89-0444 / Type 1</strain>
        <strain>NCTC 12882 / Type 3</strain>
    </source>
</reference>
<accession>P53643</accession>
<sequence length="138" mass="15241">HHSKHHATYVKGANDALEKLEEARAKDDQSTVLLNEKNLAFNLAGHVNHTIWWKNLSPNGGDKPTGELAAAIDDAFGSFDKFRAQFHAAATTVQGSGWAALGWDNLGEKLLIFQVYDHQSNFPLGVVPLLLLDMWEHA</sequence>
<comment type="function">
    <text>Destroys superoxide anion radicals which are normally produced within the cells and which are toxic to biological systems.</text>
</comment>
<comment type="catalytic activity">
    <reaction>
        <text>2 superoxide + 2 H(+) = H2O2 + O2</text>
        <dbReference type="Rhea" id="RHEA:20696"/>
        <dbReference type="ChEBI" id="CHEBI:15378"/>
        <dbReference type="ChEBI" id="CHEBI:15379"/>
        <dbReference type="ChEBI" id="CHEBI:16240"/>
        <dbReference type="ChEBI" id="CHEBI:18421"/>
        <dbReference type="EC" id="1.15.1.1"/>
    </reaction>
</comment>
<comment type="cofactor">
    <cofactor evidence="1">
        <name>Mn(2+)</name>
        <dbReference type="ChEBI" id="CHEBI:29035"/>
    </cofactor>
    <text evidence="1">Binds 1 Mn(2+) ion per subunit.</text>
</comment>
<comment type="similarity">
    <text evidence="2">Belongs to the iron/manganese superoxide dismutase family.</text>
</comment>
<feature type="chain" id="PRO_0000160046" description="Superoxide dismutase [Mn]">
    <location>
        <begin position="1" status="less than"/>
        <end position="138" status="greater than"/>
    </location>
</feature>
<feature type="binding site" evidence="1">
    <location>
        <position position="1"/>
    </location>
    <ligand>
        <name>Mn(2+)</name>
        <dbReference type="ChEBI" id="CHEBI:29035"/>
    </ligand>
</feature>
<feature type="binding site" evidence="1">
    <location>
        <position position="49"/>
    </location>
    <ligand>
        <name>Mn(2+)</name>
        <dbReference type="ChEBI" id="CHEBI:29035"/>
    </ligand>
</feature>
<feature type="binding site" evidence="1">
    <location>
        <position position="133"/>
    </location>
    <ligand>
        <name>Mn(2+)</name>
        <dbReference type="ChEBI" id="CHEBI:29035"/>
    </ligand>
</feature>
<feature type="binding site" evidence="1">
    <location>
        <position position="137"/>
    </location>
    <ligand>
        <name>Mn(2+)</name>
        <dbReference type="ChEBI" id="CHEBI:29035"/>
    </ligand>
</feature>
<feature type="sequence variant" description="In strain: NCTC 12882.">
    <original>V</original>
    <variation>I</variation>
    <location>
        <position position="32"/>
    </location>
</feature>
<feature type="sequence variant" description="In strain: NCTC 12882.">
    <original>S</original>
    <variation>T</variation>
    <location>
        <position position="120"/>
    </location>
</feature>
<feature type="non-terminal residue">
    <location>
        <position position="1"/>
    </location>
</feature>
<feature type="non-terminal residue">
    <location>
        <position position="138"/>
    </location>
</feature>
<organism>
    <name type="scientific">Mycobacterium celatum</name>
    <dbReference type="NCBI Taxonomy" id="28045"/>
    <lineage>
        <taxon>Bacteria</taxon>
        <taxon>Bacillati</taxon>
        <taxon>Actinomycetota</taxon>
        <taxon>Actinomycetes</taxon>
        <taxon>Mycobacteriales</taxon>
        <taxon>Mycobacteriaceae</taxon>
        <taxon>Mycobacterium</taxon>
    </lineage>
</organism>
<evidence type="ECO:0000250" key="1"/>
<evidence type="ECO:0000305" key="2"/>
<name>SODM_MYCCE</name>
<gene>
    <name type="primary">sodA</name>
    <name type="synonym">sod</name>
</gene>